<keyword id="KW-0963">Cytoplasm</keyword>
<keyword id="KW-0269">Exonuclease</keyword>
<keyword id="KW-0378">Hydrolase</keyword>
<keyword id="KW-0540">Nuclease</keyword>
<keyword id="KW-1185">Reference proteome</keyword>
<protein>
    <recommendedName>
        <fullName evidence="1">Exodeoxyribonuclease 7 large subunit</fullName>
        <ecNumber evidence="1">3.1.11.6</ecNumber>
    </recommendedName>
    <alternativeName>
        <fullName evidence="1">Exodeoxyribonuclease VII large subunit</fullName>
        <shortName evidence="1">Exonuclease VII large subunit</shortName>
    </alternativeName>
</protein>
<accession>Q8Y7C4</accession>
<dbReference type="EC" id="3.1.11.6" evidence="1"/>
<dbReference type="EMBL" id="AL591978">
    <property type="protein sequence ID" value="CAC99439.1"/>
    <property type="molecule type" value="Genomic_DNA"/>
</dbReference>
<dbReference type="PIR" id="AI1244">
    <property type="entry name" value="AI1244"/>
</dbReference>
<dbReference type="RefSeq" id="NP_464886.1">
    <property type="nucleotide sequence ID" value="NC_003210.1"/>
</dbReference>
<dbReference type="RefSeq" id="WP_010990104.1">
    <property type="nucleotide sequence ID" value="NZ_CP149495.1"/>
</dbReference>
<dbReference type="SMR" id="Q8Y7C4"/>
<dbReference type="STRING" id="169963.gene:17594018"/>
<dbReference type="PaxDb" id="169963-lmo1361"/>
<dbReference type="DNASU" id="987878"/>
<dbReference type="EnsemblBacteria" id="CAC99439">
    <property type="protein sequence ID" value="CAC99439"/>
    <property type="gene ID" value="CAC99439"/>
</dbReference>
<dbReference type="GeneID" id="987878"/>
<dbReference type="KEGG" id="lmo:lmo1361"/>
<dbReference type="PATRIC" id="fig|169963.11.peg.1398"/>
<dbReference type="eggNOG" id="COG1570">
    <property type="taxonomic scope" value="Bacteria"/>
</dbReference>
<dbReference type="HOGENOM" id="CLU_023625_3_1_9"/>
<dbReference type="OrthoDB" id="9802795at2"/>
<dbReference type="PhylomeDB" id="Q8Y7C4"/>
<dbReference type="BioCyc" id="LMON169963:LMO1361-MONOMER"/>
<dbReference type="Proteomes" id="UP000000817">
    <property type="component" value="Chromosome"/>
</dbReference>
<dbReference type="GO" id="GO:0005737">
    <property type="term" value="C:cytoplasm"/>
    <property type="evidence" value="ECO:0007669"/>
    <property type="project" value="UniProtKB-SubCell"/>
</dbReference>
<dbReference type="GO" id="GO:0009318">
    <property type="term" value="C:exodeoxyribonuclease VII complex"/>
    <property type="evidence" value="ECO:0007669"/>
    <property type="project" value="InterPro"/>
</dbReference>
<dbReference type="GO" id="GO:0008855">
    <property type="term" value="F:exodeoxyribonuclease VII activity"/>
    <property type="evidence" value="ECO:0007669"/>
    <property type="project" value="UniProtKB-UniRule"/>
</dbReference>
<dbReference type="GO" id="GO:0003676">
    <property type="term" value="F:nucleic acid binding"/>
    <property type="evidence" value="ECO:0007669"/>
    <property type="project" value="InterPro"/>
</dbReference>
<dbReference type="GO" id="GO:0006308">
    <property type="term" value="P:DNA catabolic process"/>
    <property type="evidence" value="ECO:0007669"/>
    <property type="project" value="UniProtKB-UniRule"/>
</dbReference>
<dbReference type="CDD" id="cd04489">
    <property type="entry name" value="ExoVII_LU_OBF"/>
    <property type="match status" value="1"/>
</dbReference>
<dbReference type="HAMAP" id="MF_00378">
    <property type="entry name" value="Exonuc_7_L"/>
    <property type="match status" value="1"/>
</dbReference>
<dbReference type="InterPro" id="IPR003753">
    <property type="entry name" value="Exonuc_VII_L"/>
</dbReference>
<dbReference type="InterPro" id="IPR020579">
    <property type="entry name" value="Exonuc_VII_lsu_C"/>
</dbReference>
<dbReference type="InterPro" id="IPR025824">
    <property type="entry name" value="OB-fold_nuc-bd_dom"/>
</dbReference>
<dbReference type="NCBIfam" id="TIGR00237">
    <property type="entry name" value="xseA"/>
    <property type="match status" value="1"/>
</dbReference>
<dbReference type="PANTHER" id="PTHR30008">
    <property type="entry name" value="EXODEOXYRIBONUCLEASE 7 LARGE SUBUNIT"/>
    <property type="match status" value="1"/>
</dbReference>
<dbReference type="PANTHER" id="PTHR30008:SF0">
    <property type="entry name" value="EXODEOXYRIBONUCLEASE 7 LARGE SUBUNIT"/>
    <property type="match status" value="1"/>
</dbReference>
<dbReference type="Pfam" id="PF02601">
    <property type="entry name" value="Exonuc_VII_L"/>
    <property type="match status" value="1"/>
</dbReference>
<dbReference type="Pfam" id="PF13742">
    <property type="entry name" value="tRNA_anti_2"/>
    <property type="match status" value="1"/>
</dbReference>
<comment type="function">
    <text evidence="1">Bidirectionally degrades single-stranded DNA into large acid-insoluble oligonucleotides, which are then degraded further into small acid-soluble oligonucleotides.</text>
</comment>
<comment type="catalytic activity">
    <reaction evidence="1">
        <text>Exonucleolytic cleavage in either 5'- to 3'- or 3'- to 5'-direction to yield nucleoside 5'-phosphates.</text>
        <dbReference type="EC" id="3.1.11.6"/>
    </reaction>
</comment>
<comment type="subunit">
    <text evidence="1">Heterooligomer composed of large and small subunits.</text>
</comment>
<comment type="subcellular location">
    <subcellularLocation>
        <location evidence="1">Cytoplasm</location>
    </subcellularLocation>
</comment>
<comment type="similarity">
    <text evidence="1">Belongs to the XseA family.</text>
</comment>
<feature type="chain" id="PRO_0000197858" description="Exodeoxyribonuclease 7 large subunit">
    <location>
        <begin position="1"/>
        <end position="450"/>
    </location>
</feature>
<evidence type="ECO:0000255" key="1">
    <source>
        <dbReference type="HAMAP-Rule" id="MF_00378"/>
    </source>
</evidence>
<gene>
    <name evidence="1" type="primary">xseA</name>
    <name type="ordered locus">lmo1361</name>
</gene>
<name>EX7L_LISMO</name>
<sequence>MEQDKYLTVAAITKYIEKKFEVDPYMKQVFVRGEISNLKQPASGHLYFTVKDEFAMLRSVMFHKAVQKIGFVPEDGMNVLVTGRIGVFTKAGRYQFYAEHMEPDGVGALYIQLEQLKAQLEKEGLFAETHKKVLPSFPSKVAVVTSKTGAAVRDILTTIHRRMPSVEVIVYPTIVQGEKAAQKIVENIGKINQRNDIDVMIIGRGGGSLEELWAFNEEPVVRAVYDSDVPVISAVGHETDFALSDFSADVRAATPTAAAELAVPDYRDLEERLAERKYRLLAVTRQALERKERSLEQLKQHLILNGPKHQLEQQMERTDYFSERLNNAFSKQIFVKQTAFDRLNDRLHYYHPNKEIELQKEQMTLHLQALDKAMKQLLKDKQQSFFRQVDALEHLSPLSLLKRGFGVTYKENTLVKSVQELEVGDNIQVKMQGGHIDALITAKEEDISGN</sequence>
<organism>
    <name type="scientific">Listeria monocytogenes serovar 1/2a (strain ATCC BAA-679 / EGD-e)</name>
    <dbReference type="NCBI Taxonomy" id="169963"/>
    <lineage>
        <taxon>Bacteria</taxon>
        <taxon>Bacillati</taxon>
        <taxon>Bacillota</taxon>
        <taxon>Bacilli</taxon>
        <taxon>Bacillales</taxon>
        <taxon>Listeriaceae</taxon>
        <taxon>Listeria</taxon>
    </lineage>
</organism>
<proteinExistence type="inferred from homology"/>
<reference key="1">
    <citation type="journal article" date="2001" name="Science">
        <title>Comparative genomics of Listeria species.</title>
        <authorList>
            <person name="Glaser P."/>
            <person name="Frangeul L."/>
            <person name="Buchrieser C."/>
            <person name="Rusniok C."/>
            <person name="Amend A."/>
            <person name="Baquero F."/>
            <person name="Berche P."/>
            <person name="Bloecker H."/>
            <person name="Brandt P."/>
            <person name="Chakraborty T."/>
            <person name="Charbit A."/>
            <person name="Chetouani F."/>
            <person name="Couve E."/>
            <person name="de Daruvar A."/>
            <person name="Dehoux P."/>
            <person name="Domann E."/>
            <person name="Dominguez-Bernal G."/>
            <person name="Duchaud E."/>
            <person name="Durant L."/>
            <person name="Dussurget O."/>
            <person name="Entian K.-D."/>
            <person name="Fsihi H."/>
            <person name="Garcia-del Portillo F."/>
            <person name="Garrido P."/>
            <person name="Gautier L."/>
            <person name="Goebel W."/>
            <person name="Gomez-Lopez N."/>
            <person name="Hain T."/>
            <person name="Hauf J."/>
            <person name="Jackson D."/>
            <person name="Jones L.-M."/>
            <person name="Kaerst U."/>
            <person name="Kreft J."/>
            <person name="Kuhn M."/>
            <person name="Kunst F."/>
            <person name="Kurapkat G."/>
            <person name="Madueno E."/>
            <person name="Maitournam A."/>
            <person name="Mata Vicente J."/>
            <person name="Ng E."/>
            <person name="Nedjari H."/>
            <person name="Nordsiek G."/>
            <person name="Novella S."/>
            <person name="de Pablos B."/>
            <person name="Perez-Diaz J.-C."/>
            <person name="Purcell R."/>
            <person name="Remmel B."/>
            <person name="Rose M."/>
            <person name="Schlueter T."/>
            <person name="Simoes N."/>
            <person name="Tierrez A."/>
            <person name="Vazquez-Boland J.-A."/>
            <person name="Voss H."/>
            <person name="Wehland J."/>
            <person name="Cossart P."/>
        </authorList>
    </citation>
    <scope>NUCLEOTIDE SEQUENCE [LARGE SCALE GENOMIC DNA]</scope>
    <source>
        <strain>ATCC BAA-679 / EGD-e</strain>
    </source>
</reference>